<gene>
    <name evidence="1" type="primary">cysS</name>
    <name type="ordered locus">BPUM_0079</name>
</gene>
<comment type="catalytic activity">
    <reaction evidence="1">
        <text>tRNA(Cys) + L-cysteine + ATP = L-cysteinyl-tRNA(Cys) + AMP + diphosphate</text>
        <dbReference type="Rhea" id="RHEA:17773"/>
        <dbReference type="Rhea" id="RHEA-COMP:9661"/>
        <dbReference type="Rhea" id="RHEA-COMP:9679"/>
        <dbReference type="ChEBI" id="CHEBI:30616"/>
        <dbReference type="ChEBI" id="CHEBI:33019"/>
        <dbReference type="ChEBI" id="CHEBI:35235"/>
        <dbReference type="ChEBI" id="CHEBI:78442"/>
        <dbReference type="ChEBI" id="CHEBI:78517"/>
        <dbReference type="ChEBI" id="CHEBI:456215"/>
        <dbReference type="EC" id="6.1.1.16"/>
    </reaction>
</comment>
<comment type="cofactor">
    <cofactor evidence="1">
        <name>Zn(2+)</name>
        <dbReference type="ChEBI" id="CHEBI:29105"/>
    </cofactor>
    <text evidence="1">Binds 1 zinc ion per subunit.</text>
</comment>
<comment type="subunit">
    <text evidence="1">Monomer.</text>
</comment>
<comment type="subcellular location">
    <subcellularLocation>
        <location evidence="1">Cytoplasm</location>
    </subcellularLocation>
</comment>
<comment type="similarity">
    <text evidence="1">Belongs to the class-I aminoacyl-tRNA synthetase family.</text>
</comment>
<name>SYC_BACP2</name>
<accession>A8F962</accession>
<protein>
    <recommendedName>
        <fullName evidence="1">Cysteine--tRNA ligase</fullName>
        <ecNumber evidence="1">6.1.1.16</ecNumber>
    </recommendedName>
    <alternativeName>
        <fullName evidence="1">Cysteinyl-tRNA synthetase</fullName>
        <shortName evidence="1">CysRS</shortName>
    </alternativeName>
</protein>
<keyword id="KW-0030">Aminoacyl-tRNA synthetase</keyword>
<keyword id="KW-0067">ATP-binding</keyword>
<keyword id="KW-0963">Cytoplasm</keyword>
<keyword id="KW-0436">Ligase</keyword>
<keyword id="KW-0479">Metal-binding</keyword>
<keyword id="KW-0547">Nucleotide-binding</keyword>
<keyword id="KW-0597">Phosphoprotein</keyword>
<keyword id="KW-0648">Protein biosynthesis</keyword>
<keyword id="KW-0862">Zinc</keyword>
<organism>
    <name type="scientific">Bacillus pumilus (strain SAFR-032)</name>
    <dbReference type="NCBI Taxonomy" id="315750"/>
    <lineage>
        <taxon>Bacteria</taxon>
        <taxon>Bacillati</taxon>
        <taxon>Bacillota</taxon>
        <taxon>Bacilli</taxon>
        <taxon>Bacillales</taxon>
        <taxon>Bacillaceae</taxon>
        <taxon>Bacillus</taxon>
    </lineage>
</organism>
<dbReference type="EC" id="6.1.1.16" evidence="1"/>
<dbReference type="EMBL" id="CP000813">
    <property type="protein sequence ID" value="ABV60779.1"/>
    <property type="molecule type" value="Genomic_DNA"/>
</dbReference>
<dbReference type="RefSeq" id="WP_012008692.1">
    <property type="nucleotide sequence ID" value="NC_009848.4"/>
</dbReference>
<dbReference type="SMR" id="A8F962"/>
<dbReference type="STRING" id="315750.BPUM_0079"/>
<dbReference type="GeneID" id="5619323"/>
<dbReference type="KEGG" id="bpu:BPUM_0079"/>
<dbReference type="eggNOG" id="COG0215">
    <property type="taxonomic scope" value="Bacteria"/>
</dbReference>
<dbReference type="HOGENOM" id="CLU_013528_0_1_9"/>
<dbReference type="OrthoDB" id="9815130at2"/>
<dbReference type="Proteomes" id="UP000001355">
    <property type="component" value="Chromosome"/>
</dbReference>
<dbReference type="GO" id="GO:0005829">
    <property type="term" value="C:cytosol"/>
    <property type="evidence" value="ECO:0007669"/>
    <property type="project" value="TreeGrafter"/>
</dbReference>
<dbReference type="GO" id="GO:0005524">
    <property type="term" value="F:ATP binding"/>
    <property type="evidence" value="ECO:0007669"/>
    <property type="project" value="UniProtKB-UniRule"/>
</dbReference>
<dbReference type="GO" id="GO:0004817">
    <property type="term" value="F:cysteine-tRNA ligase activity"/>
    <property type="evidence" value="ECO:0007669"/>
    <property type="project" value="UniProtKB-UniRule"/>
</dbReference>
<dbReference type="GO" id="GO:0008270">
    <property type="term" value="F:zinc ion binding"/>
    <property type="evidence" value="ECO:0007669"/>
    <property type="project" value="UniProtKB-UniRule"/>
</dbReference>
<dbReference type="GO" id="GO:0006423">
    <property type="term" value="P:cysteinyl-tRNA aminoacylation"/>
    <property type="evidence" value="ECO:0007669"/>
    <property type="project" value="UniProtKB-UniRule"/>
</dbReference>
<dbReference type="CDD" id="cd00672">
    <property type="entry name" value="CysRS_core"/>
    <property type="match status" value="1"/>
</dbReference>
<dbReference type="FunFam" id="3.40.50.620:FF:000009">
    <property type="entry name" value="Cysteine--tRNA ligase"/>
    <property type="match status" value="1"/>
</dbReference>
<dbReference type="Gene3D" id="1.20.120.1910">
    <property type="entry name" value="Cysteine-tRNA ligase, C-terminal anti-codon recognition domain"/>
    <property type="match status" value="1"/>
</dbReference>
<dbReference type="Gene3D" id="3.40.50.620">
    <property type="entry name" value="HUPs"/>
    <property type="match status" value="1"/>
</dbReference>
<dbReference type="HAMAP" id="MF_00041">
    <property type="entry name" value="Cys_tRNA_synth"/>
    <property type="match status" value="1"/>
</dbReference>
<dbReference type="InterPro" id="IPR015803">
    <property type="entry name" value="Cys-tRNA-ligase"/>
</dbReference>
<dbReference type="InterPro" id="IPR015273">
    <property type="entry name" value="Cys-tRNA-synt_Ia_DALR"/>
</dbReference>
<dbReference type="InterPro" id="IPR024909">
    <property type="entry name" value="Cys-tRNA/MSH_ligase"/>
</dbReference>
<dbReference type="InterPro" id="IPR056411">
    <property type="entry name" value="CysS_C"/>
</dbReference>
<dbReference type="InterPro" id="IPR014729">
    <property type="entry name" value="Rossmann-like_a/b/a_fold"/>
</dbReference>
<dbReference type="InterPro" id="IPR032678">
    <property type="entry name" value="tRNA-synt_1_cat_dom"/>
</dbReference>
<dbReference type="InterPro" id="IPR009080">
    <property type="entry name" value="tRNAsynth_Ia_anticodon-bd"/>
</dbReference>
<dbReference type="NCBIfam" id="TIGR00435">
    <property type="entry name" value="cysS"/>
    <property type="match status" value="1"/>
</dbReference>
<dbReference type="PANTHER" id="PTHR10890:SF3">
    <property type="entry name" value="CYSTEINE--TRNA LIGASE, CYTOPLASMIC"/>
    <property type="match status" value="1"/>
</dbReference>
<dbReference type="PANTHER" id="PTHR10890">
    <property type="entry name" value="CYSTEINYL-TRNA SYNTHETASE"/>
    <property type="match status" value="1"/>
</dbReference>
<dbReference type="Pfam" id="PF23493">
    <property type="entry name" value="CysS_C"/>
    <property type="match status" value="1"/>
</dbReference>
<dbReference type="Pfam" id="PF09190">
    <property type="entry name" value="DALR_2"/>
    <property type="match status" value="1"/>
</dbReference>
<dbReference type="Pfam" id="PF01406">
    <property type="entry name" value="tRNA-synt_1e"/>
    <property type="match status" value="1"/>
</dbReference>
<dbReference type="PRINTS" id="PR00983">
    <property type="entry name" value="TRNASYNTHCYS"/>
</dbReference>
<dbReference type="SMART" id="SM00840">
    <property type="entry name" value="DALR_2"/>
    <property type="match status" value="1"/>
</dbReference>
<dbReference type="SUPFAM" id="SSF47323">
    <property type="entry name" value="Anticodon-binding domain of a subclass of class I aminoacyl-tRNA synthetases"/>
    <property type="match status" value="1"/>
</dbReference>
<dbReference type="SUPFAM" id="SSF52374">
    <property type="entry name" value="Nucleotidylyl transferase"/>
    <property type="match status" value="1"/>
</dbReference>
<proteinExistence type="inferred from homology"/>
<evidence type="ECO:0000255" key="1">
    <source>
        <dbReference type="HAMAP-Rule" id="MF_00041"/>
    </source>
</evidence>
<reference key="1">
    <citation type="journal article" date="2007" name="PLoS ONE">
        <title>Paradoxical DNA repair and peroxide resistance gene conservation in Bacillus pumilus SAFR-032.</title>
        <authorList>
            <person name="Gioia J."/>
            <person name="Yerrapragada S."/>
            <person name="Qin X."/>
            <person name="Jiang H."/>
            <person name="Igboeli O.C."/>
            <person name="Muzny D."/>
            <person name="Dugan-Rocha S."/>
            <person name="Ding Y."/>
            <person name="Hawes A."/>
            <person name="Liu W."/>
            <person name="Perez L."/>
            <person name="Kovar C."/>
            <person name="Dinh H."/>
            <person name="Lee S."/>
            <person name="Nazareth L."/>
            <person name="Blyth P."/>
            <person name="Holder M."/>
            <person name="Buhay C."/>
            <person name="Tirumalai M.R."/>
            <person name="Liu Y."/>
            <person name="Dasgupta I."/>
            <person name="Bokhetache L."/>
            <person name="Fujita M."/>
            <person name="Karouia F."/>
            <person name="Eswara Moorthy P."/>
            <person name="Siefert J."/>
            <person name="Uzman A."/>
            <person name="Buzumbo P."/>
            <person name="Verma A."/>
            <person name="Zwiya H."/>
            <person name="McWilliams B.D."/>
            <person name="Olowu A."/>
            <person name="Clinkenbeard K.D."/>
            <person name="Newcombe D."/>
            <person name="Golebiewski L."/>
            <person name="Petrosino J.F."/>
            <person name="Nicholson W.L."/>
            <person name="Fox G.E."/>
            <person name="Venkateswaran K."/>
            <person name="Highlander S.K."/>
            <person name="Weinstock G.M."/>
        </authorList>
    </citation>
    <scope>NUCLEOTIDE SEQUENCE [LARGE SCALE GENOMIC DNA]</scope>
    <source>
        <strain>SAFR-032</strain>
    </source>
</reference>
<sequence>MTINIYNTLTRKKEEFVPLEPGKVKMYVCGPTVYNYIHIGNARPAIVYDTVRKYLEYSGYDVNFVSNFTDVDDKLIKAANELGEDVPTIADRFIQAYFEDVSALGCKKADLHPRVTENMDDIIAFIETLIEKGYAYEADGDVYYSTRSFEGYGKLSHQSIDELKTGARIRVGEKKRDALDFALWKAAKNQEISWDSPWGEGRPGWHIECSAMVKKYLGDTIDIHAGGQDLTFPHHENEIAQSEALTGKPFAKYWMHNGYINIENEKMSKSLGNFVLVHDIVKEQDPDVLRFFMLSVHYRHPINYSMDLLESTKSAFNRLKTSYANLHHRLESSTNITEDNAKWLAKVEEQRATFISEMNDDFNTANAISVLFELAKQANYYMENDHTSEEVIKAFIGLFQEITSVLGFSLEEKHTLEKEVEALIEQRNEARRNRDFALSDQIRDQLKSMNIVLEDTPQGTRWKRGE</sequence>
<feature type="chain" id="PRO_0000332789" description="Cysteine--tRNA ligase">
    <location>
        <begin position="1"/>
        <end position="466"/>
    </location>
</feature>
<feature type="short sequence motif" description="'HIGH' region">
    <location>
        <begin position="31"/>
        <end position="41"/>
    </location>
</feature>
<feature type="short sequence motif" description="'KMSKS' region">
    <location>
        <begin position="266"/>
        <end position="270"/>
    </location>
</feature>
<feature type="binding site" evidence="1">
    <location>
        <position position="29"/>
    </location>
    <ligand>
        <name>Zn(2+)</name>
        <dbReference type="ChEBI" id="CHEBI:29105"/>
    </ligand>
</feature>
<feature type="binding site" evidence="1">
    <location>
        <position position="209"/>
    </location>
    <ligand>
        <name>Zn(2+)</name>
        <dbReference type="ChEBI" id="CHEBI:29105"/>
    </ligand>
</feature>
<feature type="binding site" evidence="1">
    <location>
        <position position="234"/>
    </location>
    <ligand>
        <name>Zn(2+)</name>
        <dbReference type="ChEBI" id="CHEBI:29105"/>
    </ligand>
</feature>
<feature type="binding site" evidence="1">
    <location>
        <position position="238"/>
    </location>
    <ligand>
        <name>Zn(2+)</name>
        <dbReference type="ChEBI" id="CHEBI:29105"/>
    </ligand>
</feature>
<feature type="binding site" evidence="1">
    <location>
        <position position="269"/>
    </location>
    <ligand>
        <name>ATP</name>
        <dbReference type="ChEBI" id="CHEBI:30616"/>
    </ligand>
</feature>
<feature type="modified residue" description="Phosphoserine" evidence="1">
    <location>
        <position position="270"/>
    </location>
</feature>